<comment type="function">
    <text evidence="1">Catalyzes the reversible formation of acyl-phosphate (acyl-PO(4)) from acyl-[acyl-carrier-protein] (acyl-ACP). This enzyme utilizes acyl-ACP as fatty acyl donor, but not acyl-CoA.</text>
</comment>
<comment type="catalytic activity">
    <reaction evidence="1">
        <text>a fatty acyl-[ACP] + phosphate = an acyl phosphate + holo-[ACP]</text>
        <dbReference type="Rhea" id="RHEA:42292"/>
        <dbReference type="Rhea" id="RHEA-COMP:9685"/>
        <dbReference type="Rhea" id="RHEA-COMP:14125"/>
        <dbReference type="ChEBI" id="CHEBI:43474"/>
        <dbReference type="ChEBI" id="CHEBI:59918"/>
        <dbReference type="ChEBI" id="CHEBI:64479"/>
        <dbReference type="ChEBI" id="CHEBI:138651"/>
        <dbReference type="EC" id="2.3.1.274"/>
    </reaction>
</comment>
<comment type="pathway">
    <text evidence="1">Lipid metabolism; phospholipid metabolism.</text>
</comment>
<comment type="subunit">
    <text evidence="1">Homodimer. Probably interacts with PlsY.</text>
</comment>
<comment type="subcellular location">
    <subcellularLocation>
        <location evidence="1">Cytoplasm</location>
    </subcellularLocation>
    <text evidence="1">Associated with the membrane possibly through PlsY.</text>
</comment>
<comment type="similarity">
    <text evidence="1">Belongs to the PlsX family.</text>
</comment>
<protein>
    <recommendedName>
        <fullName evidence="1">Phosphate acyltransferase</fullName>
        <ecNumber evidence="1">2.3.1.274</ecNumber>
    </recommendedName>
    <alternativeName>
        <fullName evidence="1">Acyl-ACP phosphotransacylase</fullName>
    </alternativeName>
    <alternativeName>
        <fullName evidence="1">Acyl-[acyl-carrier-protein]--phosphate acyltransferase</fullName>
    </alternativeName>
    <alternativeName>
        <fullName evidence="1">Phosphate-acyl-ACP acyltransferase</fullName>
    </alternativeName>
</protein>
<keyword id="KW-0963">Cytoplasm</keyword>
<keyword id="KW-0444">Lipid biosynthesis</keyword>
<keyword id="KW-0443">Lipid metabolism</keyword>
<keyword id="KW-0594">Phospholipid biosynthesis</keyword>
<keyword id="KW-1208">Phospholipid metabolism</keyword>
<keyword id="KW-0808">Transferase</keyword>
<organism>
    <name type="scientific">Clostridium botulinum (strain Langeland / NCTC 10281 / Type F)</name>
    <dbReference type="NCBI Taxonomy" id="441772"/>
    <lineage>
        <taxon>Bacteria</taxon>
        <taxon>Bacillati</taxon>
        <taxon>Bacillota</taxon>
        <taxon>Clostridia</taxon>
        <taxon>Eubacteriales</taxon>
        <taxon>Clostridiaceae</taxon>
        <taxon>Clostridium</taxon>
    </lineage>
</organism>
<gene>
    <name evidence="1" type="primary">plsX</name>
    <name type="ordered locus">CLI_2513</name>
</gene>
<feature type="chain" id="PRO_1000001747" description="Phosphate acyltransferase">
    <location>
        <begin position="1"/>
        <end position="335"/>
    </location>
</feature>
<name>PLSX_CLOBL</name>
<dbReference type="EC" id="2.3.1.274" evidence="1"/>
<dbReference type="EMBL" id="CP000728">
    <property type="protein sequence ID" value="ABS40369.1"/>
    <property type="molecule type" value="Genomic_DNA"/>
</dbReference>
<dbReference type="RefSeq" id="WP_012100395.1">
    <property type="nucleotide sequence ID" value="NC_009699.1"/>
</dbReference>
<dbReference type="SMR" id="A7GG45"/>
<dbReference type="KEGG" id="cbf:CLI_2513"/>
<dbReference type="HOGENOM" id="CLU_039379_1_1_9"/>
<dbReference type="UniPathway" id="UPA00085"/>
<dbReference type="Proteomes" id="UP000002410">
    <property type="component" value="Chromosome"/>
</dbReference>
<dbReference type="GO" id="GO:0005737">
    <property type="term" value="C:cytoplasm"/>
    <property type="evidence" value="ECO:0007669"/>
    <property type="project" value="UniProtKB-SubCell"/>
</dbReference>
<dbReference type="GO" id="GO:0043811">
    <property type="term" value="F:phosphate:acyl-[acyl carrier protein] acyltransferase activity"/>
    <property type="evidence" value="ECO:0007669"/>
    <property type="project" value="UniProtKB-UniRule"/>
</dbReference>
<dbReference type="GO" id="GO:0006633">
    <property type="term" value="P:fatty acid biosynthetic process"/>
    <property type="evidence" value="ECO:0007669"/>
    <property type="project" value="UniProtKB-UniRule"/>
</dbReference>
<dbReference type="GO" id="GO:0008654">
    <property type="term" value="P:phospholipid biosynthetic process"/>
    <property type="evidence" value="ECO:0007669"/>
    <property type="project" value="UniProtKB-KW"/>
</dbReference>
<dbReference type="Gene3D" id="3.40.718.10">
    <property type="entry name" value="Isopropylmalate Dehydrogenase"/>
    <property type="match status" value="1"/>
</dbReference>
<dbReference type="HAMAP" id="MF_00019">
    <property type="entry name" value="PlsX"/>
    <property type="match status" value="1"/>
</dbReference>
<dbReference type="InterPro" id="IPR003664">
    <property type="entry name" value="FA_synthesis"/>
</dbReference>
<dbReference type="InterPro" id="IPR012281">
    <property type="entry name" value="Phospholipid_synth_PlsX-like"/>
</dbReference>
<dbReference type="NCBIfam" id="TIGR00182">
    <property type="entry name" value="plsX"/>
    <property type="match status" value="1"/>
</dbReference>
<dbReference type="PANTHER" id="PTHR30100">
    <property type="entry name" value="FATTY ACID/PHOSPHOLIPID SYNTHESIS PROTEIN PLSX"/>
    <property type="match status" value="1"/>
</dbReference>
<dbReference type="PANTHER" id="PTHR30100:SF1">
    <property type="entry name" value="PHOSPHATE ACYLTRANSFERASE"/>
    <property type="match status" value="1"/>
</dbReference>
<dbReference type="Pfam" id="PF02504">
    <property type="entry name" value="FA_synthesis"/>
    <property type="match status" value="1"/>
</dbReference>
<dbReference type="PIRSF" id="PIRSF002465">
    <property type="entry name" value="Phsphlp_syn_PlsX"/>
    <property type="match status" value="1"/>
</dbReference>
<dbReference type="SUPFAM" id="SSF53659">
    <property type="entry name" value="Isocitrate/Isopropylmalate dehydrogenase-like"/>
    <property type="match status" value="1"/>
</dbReference>
<reference key="1">
    <citation type="submission" date="2007-06" db="EMBL/GenBank/DDBJ databases">
        <authorList>
            <person name="Brinkac L.M."/>
            <person name="Daugherty S."/>
            <person name="Dodson R.J."/>
            <person name="Madupu R."/>
            <person name="Brown J.L."/>
            <person name="Bruce D."/>
            <person name="Detter C."/>
            <person name="Munk C."/>
            <person name="Smith L.A."/>
            <person name="Smith T.J."/>
            <person name="White O."/>
            <person name="Brettin T.S."/>
        </authorList>
    </citation>
    <scope>NUCLEOTIDE SEQUENCE [LARGE SCALE GENOMIC DNA]</scope>
    <source>
        <strain>Langeland / NCTC 10281 / Type F</strain>
    </source>
</reference>
<evidence type="ECO:0000255" key="1">
    <source>
        <dbReference type="HAMAP-Rule" id="MF_00019"/>
    </source>
</evidence>
<accession>A7GG45</accession>
<sequence>MIIAVDGMGGDFAPELVVEGCIQAVKEYEGIHIIITGKKELIKNELDKREYNGNKIEILNSEEVISTNEAPVKAIRRKKDSSMVKALELVKEGKAQAVISAGSTGALMAGATFVLGRIKGINRVCLAPLLPGAKAPFMIADAGANVDCKAEYLVQFAMMGKVYFESVLGVKSPTVGLVNIGAEEEKGNELTKAAYKLLKDTDFNFIGNIEPRDIPRGEVNIAVCDGFIGNTVLKTYEGVASNLFSMLKKEIMASTRGKIGGALLKPVFKDFKKKFDYTEYGGSPFLGAKGICIKAHGSSDAKAFKNAIRQAKICYDKKIIEEIENNLGNLIENNI</sequence>
<proteinExistence type="inferred from homology"/>